<keyword id="KW-0378">Hydrolase</keyword>
<keyword id="KW-0460">Magnesium</keyword>
<keyword id="KW-0464">Manganese</keyword>
<keyword id="KW-0479">Metal-binding</keyword>
<keyword id="KW-0576">Peroxisome</keyword>
<evidence type="ECO:0000250" key="1">
    <source>
        <dbReference type="UniProtKB" id="P11930"/>
    </source>
</evidence>
<evidence type="ECO:0000255" key="2"/>
<evidence type="ECO:0000255" key="3">
    <source>
        <dbReference type="PROSITE-ProRule" id="PRU00794"/>
    </source>
</evidence>
<evidence type="ECO:0000256" key="4">
    <source>
        <dbReference type="SAM" id="MobiDB-lite"/>
    </source>
</evidence>
<evidence type="ECO:0000305" key="5"/>
<protein>
    <recommendedName>
        <fullName>Acyl-coenzyme A diphosphatase NUDT19</fullName>
        <ecNumber>3.6.1.-</ecNumber>
        <ecNumber evidence="1">3.6.1.77</ecNumber>
    </recommendedName>
    <alternativeName>
        <fullName>Androgen-regulated protein RP2</fullName>
    </alternativeName>
    <alternativeName>
        <fullName>Nucleoside diphosphate-linked moiety X motif 19</fullName>
        <shortName>Nudix motif 19</shortName>
    </alternativeName>
    <alternativeName>
        <fullName>Testosterone-regulated RP2 protein</fullName>
        <shortName>RP2p</shortName>
    </alternativeName>
</protein>
<sequence length="357" mass="40256">MSGPSSWRRAATVMLAAGWTHSSPAGFRLLLLQRSQNQRFIPGAHVFPGGVLDAADSSPDWVRLFAPRHTPPRFGLGPEPPRQPPFPGLSHGDADPAALPDDVALRICAIRETFEEAGVLLLRPRDADPASQEPSQALSPPAGLAEWRSRVRSDPRCFLQLCAHLDCTPDIWALHDWGGWLTPYGRITRRFDTTFLLCCLRDTPRVEPDLAEVVGYQWLSPSEATECFLSKEIWLAPPQFYEIRRLDNFASLSALYRFCSDRPLEGGEKWLPIILLTSDGTIHLLPGDELYVKDSDFLEKNMSTDKKTEEIVKEGKVLNRVVIHSPYVYEIYMTLPSENKHVYPRNYVVNKRCTAHL</sequence>
<reference key="1">
    <citation type="journal article" date="1991" name="Mol. Biol. Evol.">
        <title>Evolution of messenger RNA structure and regulation in the genus Mus: the androgen-inducible RP2 mRNAs.</title>
        <authorList>
            <person name="Chaudhuri A."/>
            <person name="Barbour K.W."/>
            <person name="Berger F.G."/>
        </authorList>
    </citation>
    <scope>NUCLEOTIDE SEQUENCE [MRNA]</scope>
</reference>
<accession>Q7M0H3</accession>
<name>NUD19_MUSCR</name>
<organism>
    <name type="scientific">Mus caroli</name>
    <name type="common">Ryukyu mouse</name>
    <name type="synonym">Ricefield mouse</name>
    <dbReference type="NCBI Taxonomy" id="10089"/>
    <lineage>
        <taxon>Eukaryota</taxon>
        <taxon>Metazoa</taxon>
        <taxon>Chordata</taxon>
        <taxon>Craniata</taxon>
        <taxon>Vertebrata</taxon>
        <taxon>Euteleostomi</taxon>
        <taxon>Mammalia</taxon>
        <taxon>Eutheria</taxon>
        <taxon>Euarchontoglires</taxon>
        <taxon>Glires</taxon>
        <taxon>Rodentia</taxon>
        <taxon>Myomorpha</taxon>
        <taxon>Muroidea</taxon>
        <taxon>Muridae</taxon>
        <taxon>Murinae</taxon>
        <taxon>Mus</taxon>
        <taxon>Mus</taxon>
    </lineage>
</organism>
<proteinExistence type="evidence at transcript level"/>
<comment type="function">
    <text evidence="1">Fatty acyl-coenzyme A (CoA) diphosphatase that hydrolyzes fatty acyl-CoA to yield acyl-4'-phosphopantetheine and adenosine 3',5'-bisphosphate (By similarity). Mediates the hydrolysis of a wide range of CoA esters, including choloyl-CoA and branched-chain fatty-acyl-CoA esters and at low substrate concentrations medium and long-chain fatty-acyl-CoA esters are the primary substrates (By similarity). Highest activity seen with medium-chain acyl-CoA esters and higher rates of activity seen with the unsaturated acyl-CoA esters compared with the saturated esters (By similarity). Exhibits decapping activity towards dpCoA-capped RNAs in vitro (By similarity).</text>
</comment>
<comment type="catalytic activity">
    <reaction evidence="1">
        <text>an acyl-CoA + H2O = an acyl-4'-phosphopantetheine + adenosine 3',5'-bisphosphate + 2 H(+)</text>
        <dbReference type="Rhea" id="RHEA:50044"/>
        <dbReference type="ChEBI" id="CHEBI:15377"/>
        <dbReference type="ChEBI" id="CHEBI:15378"/>
        <dbReference type="ChEBI" id="CHEBI:58342"/>
        <dbReference type="ChEBI" id="CHEBI:58343"/>
        <dbReference type="ChEBI" id="CHEBI:132023"/>
    </reaction>
    <physiologicalReaction direction="left-to-right" evidence="1">
        <dbReference type="Rhea" id="RHEA:50045"/>
    </physiologicalReaction>
</comment>
<comment type="catalytic activity">
    <reaction evidence="1">
        <text>CoA + H2O = (R)-4'-phosphopantetheine + adenosine 3',5'-bisphosphate + 2 H(+)</text>
        <dbReference type="Rhea" id="RHEA:64988"/>
        <dbReference type="ChEBI" id="CHEBI:15377"/>
        <dbReference type="ChEBI" id="CHEBI:15378"/>
        <dbReference type="ChEBI" id="CHEBI:57287"/>
        <dbReference type="ChEBI" id="CHEBI:58343"/>
        <dbReference type="ChEBI" id="CHEBI:61723"/>
        <dbReference type="EC" id="3.6.1.77"/>
    </reaction>
    <physiologicalReaction direction="left-to-right" evidence="1">
        <dbReference type="Rhea" id="RHEA:64989"/>
    </physiologicalReaction>
</comment>
<comment type="catalytic activity">
    <reaction evidence="1">
        <text>hexanoyl-CoA + H2O = hexanoyl-4'-phosphopantetheine + adenosine 3',5'-bisphosphate + 2 H(+)</text>
        <dbReference type="Rhea" id="RHEA:49980"/>
        <dbReference type="ChEBI" id="CHEBI:15377"/>
        <dbReference type="ChEBI" id="CHEBI:15378"/>
        <dbReference type="ChEBI" id="CHEBI:58343"/>
        <dbReference type="ChEBI" id="CHEBI:62620"/>
        <dbReference type="ChEBI" id="CHEBI:132012"/>
    </reaction>
    <physiologicalReaction direction="left-to-right" evidence="1">
        <dbReference type="Rhea" id="RHEA:49981"/>
    </physiologicalReaction>
</comment>
<comment type="catalytic activity">
    <reaction evidence="1">
        <text>octanoyl-CoA + H2O = S-octanoyl-4'-phosphopantetheine + adenosine 3',5'-bisphosphate + 2 H(+)</text>
        <dbReference type="Rhea" id="RHEA:50016"/>
        <dbReference type="ChEBI" id="CHEBI:15377"/>
        <dbReference type="ChEBI" id="CHEBI:15378"/>
        <dbReference type="ChEBI" id="CHEBI:57386"/>
        <dbReference type="ChEBI" id="CHEBI:58343"/>
        <dbReference type="ChEBI" id="CHEBI:132013"/>
    </reaction>
    <physiologicalReaction direction="left-to-right" evidence="1">
        <dbReference type="Rhea" id="RHEA:50017"/>
    </physiologicalReaction>
</comment>
<comment type="catalytic activity">
    <reaction evidence="1">
        <text>butanoyl-CoA + H2O = S-butanoyl-4'-phosphopantetheine + adenosine 3',5'-bisphosphate + 2 H(+)</text>
        <dbReference type="Rhea" id="RHEA:49976"/>
        <dbReference type="ChEBI" id="CHEBI:15377"/>
        <dbReference type="ChEBI" id="CHEBI:15378"/>
        <dbReference type="ChEBI" id="CHEBI:57371"/>
        <dbReference type="ChEBI" id="CHEBI:58343"/>
        <dbReference type="ChEBI" id="CHEBI:132011"/>
    </reaction>
    <physiologicalReaction direction="left-to-right" evidence="1">
        <dbReference type="Rhea" id="RHEA:49977"/>
    </physiologicalReaction>
</comment>
<comment type="catalytic activity">
    <reaction evidence="1">
        <text>propanoyl-CoA + H2O = propanoyl-4'-phosphopantetheine + adenosine 3',5'-bisphosphate + 2 H(+)</text>
        <dbReference type="Rhea" id="RHEA:67464"/>
        <dbReference type="ChEBI" id="CHEBI:15377"/>
        <dbReference type="ChEBI" id="CHEBI:15378"/>
        <dbReference type="ChEBI" id="CHEBI:57392"/>
        <dbReference type="ChEBI" id="CHEBI:58343"/>
        <dbReference type="ChEBI" id="CHEBI:172362"/>
    </reaction>
    <physiologicalReaction direction="left-to-right" evidence="1">
        <dbReference type="Rhea" id="RHEA:67465"/>
    </physiologicalReaction>
</comment>
<comment type="catalytic activity">
    <reaction evidence="1">
        <text>malonyl-CoA + H2O = malonyl-4'-phosphopantetheine + adenosine 3',5'-bisphosphate + 2 H(+)</text>
        <dbReference type="Rhea" id="RHEA:67468"/>
        <dbReference type="ChEBI" id="CHEBI:15377"/>
        <dbReference type="ChEBI" id="CHEBI:15378"/>
        <dbReference type="ChEBI" id="CHEBI:57384"/>
        <dbReference type="ChEBI" id="CHEBI:58343"/>
        <dbReference type="ChEBI" id="CHEBI:172363"/>
    </reaction>
    <physiologicalReaction direction="left-to-right" evidence="1">
        <dbReference type="Rhea" id="RHEA:67469"/>
    </physiologicalReaction>
</comment>
<comment type="catalytic activity">
    <reaction evidence="1">
        <text>succinyl-CoA + H2O = succinyl-4'-phosphopantetheine + adenosine 3',5'-bisphosphate + 2 H(+)</text>
        <dbReference type="Rhea" id="RHEA:67472"/>
        <dbReference type="ChEBI" id="CHEBI:15377"/>
        <dbReference type="ChEBI" id="CHEBI:15378"/>
        <dbReference type="ChEBI" id="CHEBI:57292"/>
        <dbReference type="ChEBI" id="CHEBI:58343"/>
        <dbReference type="ChEBI" id="CHEBI:172364"/>
    </reaction>
    <physiologicalReaction direction="left-to-right" evidence="1">
        <dbReference type="Rhea" id="RHEA:67473"/>
    </physiologicalReaction>
</comment>
<comment type="catalytic activity">
    <reaction evidence="1">
        <text>choloyl-CoA + H2O = S-choloyl-4'-phosphopantetheine + adenosine 3',5'-bisphosphate + 2 H(+)</text>
        <dbReference type="Rhea" id="RHEA:50036"/>
        <dbReference type="ChEBI" id="CHEBI:15377"/>
        <dbReference type="ChEBI" id="CHEBI:15378"/>
        <dbReference type="ChEBI" id="CHEBI:57373"/>
        <dbReference type="ChEBI" id="CHEBI:58343"/>
        <dbReference type="ChEBI" id="CHEBI:132020"/>
    </reaction>
    <physiologicalReaction direction="left-to-right" evidence="1">
        <dbReference type="Rhea" id="RHEA:50037"/>
    </physiologicalReaction>
</comment>
<comment type="catalytic activity">
    <reaction evidence="1">
        <text>4,8-dimethylnonanoyl-CoA + H2O = S-(4,8-dimethylnonanoyl)-4'-phosphopantetheine + adenosine 3',5'-bisphosphate + 2 H(+)</text>
        <dbReference type="Rhea" id="RHEA:67524"/>
        <dbReference type="ChEBI" id="CHEBI:15377"/>
        <dbReference type="ChEBI" id="CHEBI:15378"/>
        <dbReference type="ChEBI" id="CHEBI:58343"/>
        <dbReference type="ChEBI" id="CHEBI:77061"/>
        <dbReference type="ChEBI" id="CHEBI:172385"/>
    </reaction>
    <physiologicalReaction direction="left-to-right" evidence="1">
        <dbReference type="Rhea" id="RHEA:67525"/>
    </physiologicalReaction>
</comment>
<comment type="catalytic activity">
    <reaction evidence="1">
        <text>(9Z,12Z,15Z)-octadecatrienoyl-CoA + H2O = S-(9Z,12Z,15Z-octadecatrienoyl)-4'-phosphopantetheine + adenosine 3',5'-bisphosphate + 2 H(+)</text>
        <dbReference type="Rhea" id="RHEA:67532"/>
        <dbReference type="ChEBI" id="CHEBI:15377"/>
        <dbReference type="ChEBI" id="CHEBI:15378"/>
        <dbReference type="ChEBI" id="CHEBI:58343"/>
        <dbReference type="ChEBI" id="CHEBI:74034"/>
        <dbReference type="ChEBI" id="CHEBI:172386"/>
    </reaction>
    <physiologicalReaction direction="left-to-right" evidence="1">
        <dbReference type="Rhea" id="RHEA:67533"/>
    </physiologicalReaction>
</comment>
<comment type="catalytic activity">
    <reaction evidence="1">
        <text>(9Z,12Z)-octadecadienoyl-CoA + H2O = S-(9Z,12Z-octadecadienoyl)-4'-phosphopantetheine + adenosine 3',5'-bisphosphate + 2 H(+)</text>
        <dbReference type="Rhea" id="RHEA:67536"/>
        <dbReference type="ChEBI" id="CHEBI:15377"/>
        <dbReference type="ChEBI" id="CHEBI:15378"/>
        <dbReference type="ChEBI" id="CHEBI:57383"/>
        <dbReference type="ChEBI" id="CHEBI:58343"/>
        <dbReference type="ChEBI" id="CHEBI:172387"/>
    </reaction>
    <physiologicalReaction direction="left-to-right" evidence="1">
        <dbReference type="Rhea" id="RHEA:67537"/>
    </physiologicalReaction>
</comment>
<comment type="catalytic activity">
    <reaction evidence="1">
        <text>(9Z)-hexadecenoyl-CoA + H2O = S-(9Z-hexadecenoyl)-4'-phosphopantetheine + adenosine 3',5'-bisphosphate + 2 H(+)</text>
        <dbReference type="Rhea" id="RHEA:67540"/>
        <dbReference type="ChEBI" id="CHEBI:15377"/>
        <dbReference type="ChEBI" id="CHEBI:15378"/>
        <dbReference type="ChEBI" id="CHEBI:58343"/>
        <dbReference type="ChEBI" id="CHEBI:61540"/>
        <dbReference type="ChEBI" id="CHEBI:172388"/>
    </reaction>
    <physiologicalReaction direction="left-to-right" evidence="1">
        <dbReference type="Rhea" id="RHEA:67541"/>
    </physiologicalReaction>
</comment>
<comment type="catalytic activity">
    <reaction evidence="1">
        <text>(9Z)-tetradecenoyl-CoA + H2O = S-(9Z-tetradecenoyl)-4'-phosphopantetheine + adenosine 3',5'-bisphosphate + 2 H(+)</text>
        <dbReference type="Rhea" id="RHEA:67544"/>
        <dbReference type="ChEBI" id="CHEBI:15377"/>
        <dbReference type="ChEBI" id="CHEBI:15378"/>
        <dbReference type="ChEBI" id="CHEBI:58343"/>
        <dbReference type="ChEBI" id="CHEBI:65060"/>
        <dbReference type="ChEBI" id="CHEBI:172389"/>
    </reaction>
    <physiologicalReaction direction="left-to-right" evidence="1">
        <dbReference type="Rhea" id="RHEA:67545"/>
    </physiologicalReaction>
</comment>
<comment type="catalytic activity">
    <reaction evidence="1">
        <text>(6Z)-octenoyl-CoA + H2O = S-(6Z-octenoyl)-4'-phosphopantetheine + adenosine 3',5'-bisphosphate + 2 H(+)</text>
        <dbReference type="Rhea" id="RHEA:67528"/>
        <dbReference type="ChEBI" id="CHEBI:15377"/>
        <dbReference type="ChEBI" id="CHEBI:15378"/>
        <dbReference type="ChEBI" id="CHEBI:58343"/>
        <dbReference type="ChEBI" id="CHEBI:172383"/>
        <dbReference type="ChEBI" id="CHEBI:172384"/>
    </reaction>
    <physiologicalReaction direction="left-to-right" evidence="1">
        <dbReference type="Rhea" id="RHEA:67529"/>
    </physiologicalReaction>
</comment>
<comment type="catalytic activity">
    <reaction evidence="1">
        <text>hexadecanoyl-CoA + H2O = S-hexadecanoyl-4'-phosphopantetheine + adenosine 3',5'-bisphosphate + 2 H(+)</text>
        <dbReference type="Rhea" id="RHEA:50032"/>
        <dbReference type="ChEBI" id="CHEBI:15377"/>
        <dbReference type="ChEBI" id="CHEBI:15378"/>
        <dbReference type="ChEBI" id="CHEBI:57379"/>
        <dbReference type="ChEBI" id="CHEBI:58343"/>
        <dbReference type="ChEBI" id="CHEBI:132018"/>
    </reaction>
    <physiologicalReaction direction="left-to-right" evidence="1">
        <dbReference type="Rhea" id="RHEA:50033"/>
    </physiologicalReaction>
</comment>
<comment type="catalytic activity">
    <reaction evidence="1">
        <text>tetradecanoyl-CoA + H2O = tetradecanoyl-4'-phosphopantetheine + adenosine 3',5'-bisphosphate + 2 H(+)</text>
        <dbReference type="Rhea" id="RHEA:50028"/>
        <dbReference type="ChEBI" id="CHEBI:15377"/>
        <dbReference type="ChEBI" id="CHEBI:15378"/>
        <dbReference type="ChEBI" id="CHEBI:57385"/>
        <dbReference type="ChEBI" id="CHEBI:58343"/>
        <dbReference type="ChEBI" id="CHEBI:132017"/>
    </reaction>
    <physiologicalReaction direction="left-to-right" evidence="1">
        <dbReference type="Rhea" id="RHEA:50029"/>
    </physiologicalReaction>
</comment>
<comment type="catalytic activity">
    <reaction evidence="1">
        <text>dodecanoyl-CoA + H2O = S-dodecanoyl-4'-phosphopantetheine + adenosine 3',5'-bisphosphate + 2 H(+)</text>
        <dbReference type="Rhea" id="RHEA:50024"/>
        <dbReference type="ChEBI" id="CHEBI:15377"/>
        <dbReference type="ChEBI" id="CHEBI:15378"/>
        <dbReference type="ChEBI" id="CHEBI:57375"/>
        <dbReference type="ChEBI" id="CHEBI:58343"/>
        <dbReference type="ChEBI" id="CHEBI:132015"/>
    </reaction>
    <physiologicalReaction direction="left-to-right" evidence="1">
        <dbReference type="Rhea" id="RHEA:50025"/>
    </physiologicalReaction>
</comment>
<comment type="catalytic activity">
    <reaction evidence="1">
        <text>a 5'-end CoA-ribonucleoside in mRNA + H2O = a 5'-end phospho-adenosine-phospho-ribonucleoside in mRNA + (R)-4'-phosphopantetheine + 2 H(+)</text>
        <dbReference type="Rhea" id="RHEA:67592"/>
        <dbReference type="Rhea" id="RHEA-COMP:15719"/>
        <dbReference type="Rhea" id="RHEA-COMP:17276"/>
        <dbReference type="ChEBI" id="CHEBI:15377"/>
        <dbReference type="ChEBI" id="CHEBI:15378"/>
        <dbReference type="ChEBI" id="CHEBI:61723"/>
        <dbReference type="ChEBI" id="CHEBI:144051"/>
        <dbReference type="ChEBI" id="CHEBI:172371"/>
    </reaction>
    <physiologicalReaction direction="left-to-right" evidence="1">
        <dbReference type="Rhea" id="RHEA:67593"/>
    </physiologicalReaction>
</comment>
<comment type="cofactor">
    <cofactor evidence="1">
        <name>Mg(2+)</name>
        <dbReference type="ChEBI" id="CHEBI:18420"/>
    </cofactor>
    <cofactor evidence="1">
        <name>Mn(2+)</name>
        <dbReference type="ChEBI" id="CHEBI:29035"/>
    </cofactor>
</comment>
<comment type="subunit">
    <text evidence="1">Monomer.</text>
</comment>
<comment type="subcellular location">
    <subcellularLocation>
        <location evidence="1">Peroxisome</location>
    </subcellularLocation>
</comment>
<comment type="similarity">
    <text evidence="5">Belongs to the Nudix hydrolase family.</text>
</comment>
<gene>
    <name type="primary">Nudt19</name>
</gene>
<dbReference type="EC" id="3.6.1.-"/>
<dbReference type="EC" id="3.6.1.77" evidence="1"/>
<dbReference type="PIR" id="A39798">
    <property type="entry name" value="A39798"/>
</dbReference>
<dbReference type="SMR" id="Q7M0H3"/>
<dbReference type="Proteomes" id="UP000515126">
    <property type="component" value="Unplaced"/>
</dbReference>
<dbReference type="GO" id="GO:0005739">
    <property type="term" value="C:mitochondrion"/>
    <property type="evidence" value="ECO:0007669"/>
    <property type="project" value="TreeGrafter"/>
</dbReference>
<dbReference type="GO" id="GO:0005777">
    <property type="term" value="C:peroxisome"/>
    <property type="evidence" value="ECO:0007669"/>
    <property type="project" value="UniProtKB-SubCell"/>
</dbReference>
<dbReference type="GO" id="GO:0010945">
    <property type="term" value="F:coenzyme A diphosphatase activity"/>
    <property type="evidence" value="ECO:0007669"/>
    <property type="project" value="RHEA"/>
</dbReference>
<dbReference type="GO" id="GO:0000287">
    <property type="term" value="F:magnesium ion binding"/>
    <property type="evidence" value="ECO:0000250"/>
    <property type="project" value="UniProtKB"/>
</dbReference>
<dbReference type="GO" id="GO:0044580">
    <property type="term" value="P:butyryl-CoA catabolic process"/>
    <property type="evidence" value="ECO:0000250"/>
    <property type="project" value="UniProtKB"/>
</dbReference>
<dbReference type="GO" id="GO:0015938">
    <property type="term" value="P:coenzyme A catabolic process"/>
    <property type="evidence" value="ECO:0000250"/>
    <property type="project" value="UniProtKB"/>
</dbReference>
<dbReference type="GO" id="GO:2001294">
    <property type="term" value="P:malonyl-CoA catabolic process"/>
    <property type="evidence" value="ECO:0000250"/>
    <property type="project" value="UniProtKB"/>
</dbReference>
<dbReference type="GO" id="GO:0036114">
    <property type="term" value="P:medium-chain fatty-acyl-CoA catabolic process"/>
    <property type="evidence" value="ECO:0000250"/>
    <property type="project" value="UniProtKB"/>
</dbReference>
<dbReference type="GO" id="GO:1902858">
    <property type="term" value="P:propionyl-CoA metabolic process"/>
    <property type="evidence" value="ECO:0000250"/>
    <property type="project" value="UniProtKB"/>
</dbReference>
<dbReference type="GO" id="GO:1901289">
    <property type="term" value="P:succinyl-CoA catabolic process"/>
    <property type="evidence" value="ECO:0000250"/>
    <property type="project" value="UniProtKB"/>
</dbReference>
<dbReference type="CDD" id="cd18870">
    <property type="entry name" value="NUDIX_AcylCoAdiphos_Nudt19"/>
    <property type="match status" value="1"/>
</dbReference>
<dbReference type="FunFam" id="3.90.79.10:FF:000072">
    <property type="entry name" value="Nucleoside diphosphate-linked moiety X motif 19"/>
    <property type="match status" value="1"/>
</dbReference>
<dbReference type="Gene3D" id="3.90.79.10">
    <property type="entry name" value="Nucleoside Triphosphate Pyrophosphohydrolase"/>
    <property type="match status" value="1"/>
</dbReference>
<dbReference type="InterPro" id="IPR015797">
    <property type="entry name" value="NUDIX_hydrolase-like_dom_sf"/>
</dbReference>
<dbReference type="InterPro" id="IPR000086">
    <property type="entry name" value="NUDIX_hydrolase_dom"/>
</dbReference>
<dbReference type="InterPro" id="IPR039121">
    <property type="entry name" value="NUDT19"/>
</dbReference>
<dbReference type="PANTHER" id="PTHR12318:SF0">
    <property type="entry name" value="ACYL-COENZYME A DIPHOSPHATASE NUDT19"/>
    <property type="match status" value="1"/>
</dbReference>
<dbReference type="PANTHER" id="PTHR12318">
    <property type="entry name" value="TESTOSTERONE-REGULATED PROTEIN RP2"/>
    <property type="match status" value="1"/>
</dbReference>
<dbReference type="SUPFAM" id="SSF55811">
    <property type="entry name" value="Nudix"/>
    <property type="match status" value="1"/>
</dbReference>
<dbReference type="PROSITE" id="PS51462">
    <property type="entry name" value="NUDIX"/>
    <property type="match status" value="1"/>
</dbReference>
<feature type="chain" id="PRO_0000324572" description="Acyl-coenzyme A diphosphatase NUDT19">
    <location>
        <begin position="1"/>
        <end position="357"/>
    </location>
</feature>
<feature type="domain" description="Nudix hydrolase" evidence="3">
    <location>
        <begin position="10"/>
        <end position="242"/>
    </location>
</feature>
<feature type="region of interest" description="Disordered" evidence="4">
    <location>
        <begin position="72"/>
        <end position="94"/>
    </location>
</feature>
<feature type="short sequence motif" description="Nudix box">
    <location>
        <begin position="97"/>
        <end position="118"/>
    </location>
</feature>
<feature type="short sequence motif" description="Microbody targeting signal" evidence="2">
    <location>
        <begin position="355"/>
        <end position="357"/>
    </location>
</feature>
<feature type="compositionally biased region" description="Pro residues" evidence="4">
    <location>
        <begin position="78"/>
        <end position="87"/>
    </location>
</feature>
<feature type="binding site" evidence="1">
    <location>
        <position position="112"/>
    </location>
    <ligand>
        <name>Mg(2+)</name>
        <dbReference type="ChEBI" id="CHEBI:18420"/>
    </ligand>
</feature>
<feature type="binding site" evidence="1">
    <location>
        <position position="116"/>
    </location>
    <ligand>
        <name>Mg(2+)</name>
        <dbReference type="ChEBI" id="CHEBI:18420"/>
    </ligand>
</feature>
<feature type="site" description="Important for coenzyme A binding" evidence="1">
    <location>
        <position position="34"/>
    </location>
</feature>
<feature type="site" description="Important for coenzyme A binding" evidence="1">
    <location>
        <position position="40"/>
    </location>
</feature>
<feature type="site" description="Important for coenzyme A binding" evidence="1">
    <location>
        <position position="189"/>
    </location>
</feature>
<feature type="modified residue" description="N6-succinyllysine" evidence="1">
    <location>
        <position position="300"/>
    </location>
</feature>